<organism>
    <name type="scientific">Enterobacter sp. (strain 638)</name>
    <dbReference type="NCBI Taxonomy" id="399742"/>
    <lineage>
        <taxon>Bacteria</taxon>
        <taxon>Pseudomonadati</taxon>
        <taxon>Pseudomonadota</taxon>
        <taxon>Gammaproteobacteria</taxon>
        <taxon>Enterobacterales</taxon>
        <taxon>Enterobacteriaceae</taxon>
        <taxon>Enterobacter</taxon>
    </lineage>
</organism>
<feature type="chain" id="PRO_1000062214" description="UPF0306 protein Ent638_3591">
    <location>
        <begin position="1"/>
        <end position="142"/>
    </location>
</feature>
<accession>A4WEW9</accession>
<name>Y3591_ENT38</name>
<proteinExistence type="inferred from homology"/>
<gene>
    <name type="ordered locus">Ent638_3591</name>
</gene>
<comment type="similarity">
    <text evidence="1">Belongs to the UPF0306 family.</text>
</comment>
<dbReference type="EMBL" id="CP000653">
    <property type="protein sequence ID" value="ABP62249.1"/>
    <property type="molecule type" value="Genomic_DNA"/>
</dbReference>
<dbReference type="RefSeq" id="WP_015960575.1">
    <property type="nucleotide sequence ID" value="NC_009436.1"/>
</dbReference>
<dbReference type="SMR" id="A4WEW9"/>
<dbReference type="STRING" id="399742.Ent638_3591"/>
<dbReference type="KEGG" id="ent:Ent638_3591"/>
<dbReference type="eggNOG" id="COG3787">
    <property type="taxonomic scope" value="Bacteria"/>
</dbReference>
<dbReference type="HOGENOM" id="CLU_105087_3_0_6"/>
<dbReference type="OrthoDB" id="8447155at2"/>
<dbReference type="Proteomes" id="UP000000230">
    <property type="component" value="Chromosome"/>
</dbReference>
<dbReference type="Gene3D" id="2.30.110.10">
    <property type="entry name" value="Electron Transport, Fmn-binding Protein, Chain A"/>
    <property type="match status" value="1"/>
</dbReference>
<dbReference type="HAMAP" id="MF_00764">
    <property type="entry name" value="UPF0306"/>
    <property type="match status" value="1"/>
</dbReference>
<dbReference type="InterPro" id="IPR012349">
    <property type="entry name" value="Split_barrel_FMN-bd"/>
</dbReference>
<dbReference type="InterPro" id="IPR011194">
    <property type="entry name" value="UPF0306"/>
</dbReference>
<dbReference type="NCBIfam" id="NF002900">
    <property type="entry name" value="PRK03467.1"/>
    <property type="match status" value="1"/>
</dbReference>
<dbReference type="PIRSF" id="PIRSF009554">
    <property type="entry name" value="UCP009554"/>
    <property type="match status" value="1"/>
</dbReference>
<dbReference type="SUPFAM" id="SSF50475">
    <property type="entry name" value="FMN-binding split barrel"/>
    <property type="match status" value="1"/>
</dbReference>
<protein>
    <recommendedName>
        <fullName evidence="1">UPF0306 protein Ent638_3591</fullName>
    </recommendedName>
</protein>
<reference key="1">
    <citation type="journal article" date="2010" name="PLoS Genet.">
        <title>Genome sequence of the plant growth promoting endophytic bacterium Enterobacter sp. 638.</title>
        <authorList>
            <person name="Taghavi S."/>
            <person name="van der Lelie D."/>
            <person name="Hoffman A."/>
            <person name="Zhang Y.B."/>
            <person name="Walla M.D."/>
            <person name="Vangronsveld J."/>
            <person name="Newman L."/>
            <person name="Monchy S."/>
        </authorList>
    </citation>
    <scope>NUCLEOTIDE SEQUENCE [LARGE SCALE GENOMIC DNA]</scope>
    <source>
        <strain>638</strain>
    </source>
</reference>
<evidence type="ECO:0000255" key="1">
    <source>
        <dbReference type="HAMAP-Rule" id="MF_00764"/>
    </source>
</evidence>
<sequence length="142" mass="16479">METLAAINRWLAKQHVVTWCVHHEGELWCANAFYYYDPDRVAFYVLSEDKTRHAQMTGTRAKVAGTINGQPKNVALIRGVQFQGEIRRLEGEESDSMRRQYTRRFPVALALSAPVWEIRPDELKFTDNTLGFGKKLHWLRAE</sequence>